<reference key="1">
    <citation type="journal article" date="2008" name="PLoS ONE">
        <title>Environmental adaptation: genomic analysis of the piezotolerant and psychrotolerant deep-sea iron reducing bacterium Shewanella piezotolerans WP3.</title>
        <authorList>
            <person name="Wang F."/>
            <person name="Wang J."/>
            <person name="Jian H."/>
            <person name="Zhang B."/>
            <person name="Li S."/>
            <person name="Wang F."/>
            <person name="Zeng X."/>
            <person name="Gao L."/>
            <person name="Bartlett D.H."/>
            <person name="Yu J."/>
            <person name="Hu S."/>
            <person name="Xiao X."/>
        </authorList>
    </citation>
    <scope>NUCLEOTIDE SEQUENCE [LARGE SCALE GENOMIC DNA]</scope>
    <source>
        <strain>WP3 / JCM 13877</strain>
    </source>
</reference>
<proteinExistence type="inferred from homology"/>
<sequence length="247" mass="27037">MKFLVDTHAHTIASTHAYSTLHDYLNVAKEKGIKLFAITDHGPDMADAPHFWHFVNMRVLPRIIDGVGVLRGIEANIKNQQGDIDFFGDYLKQLDIVLAGFHEPVFPPSTAENHTQALINCIESGKVDIISHPGNPAYPIDIERVAQAAAKHNVALEINNSSFLTSRKGSEKSCRAIALAVKEAGGLLVMGSDSHVAFSLGDFDKAVEVIEAVQFPIERLLNRSPEALLCFLSARGHDSLDEYADLV</sequence>
<accession>B8CL73</accession>
<keyword id="KW-0378">Hydrolase</keyword>
<keyword id="KW-0479">Metal-binding</keyword>
<keyword id="KW-0862">Zinc</keyword>
<gene>
    <name type="ordered locus">swp_1620</name>
</gene>
<evidence type="ECO:0000255" key="1">
    <source>
        <dbReference type="HAMAP-Rule" id="MF_01561"/>
    </source>
</evidence>
<feature type="chain" id="PRO_1000147147" description="Probable phosphatase swp_1620">
    <location>
        <begin position="1"/>
        <end position="247"/>
    </location>
</feature>
<feature type="binding site" evidence="1">
    <location>
        <position position="8"/>
    </location>
    <ligand>
        <name>Zn(2+)</name>
        <dbReference type="ChEBI" id="CHEBI:29105"/>
        <label>1</label>
    </ligand>
</feature>
<feature type="binding site" evidence="1">
    <location>
        <position position="10"/>
    </location>
    <ligand>
        <name>Zn(2+)</name>
        <dbReference type="ChEBI" id="CHEBI:29105"/>
        <label>1</label>
    </ligand>
</feature>
<feature type="binding site" evidence="1">
    <location>
        <position position="16"/>
    </location>
    <ligand>
        <name>Zn(2+)</name>
        <dbReference type="ChEBI" id="CHEBI:29105"/>
        <label>2</label>
    </ligand>
</feature>
<feature type="binding site" evidence="1">
    <location>
        <position position="41"/>
    </location>
    <ligand>
        <name>Zn(2+)</name>
        <dbReference type="ChEBI" id="CHEBI:29105"/>
        <label>2</label>
    </ligand>
</feature>
<feature type="binding site" evidence="1">
    <location>
        <position position="74"/>
    </location>
    <ligand>
        <name>Zn(2+)</name>
        <dbReference type="ChEBI" id="CHEBI:29105"/>
        <label>1</label>
    </ligand>
</feature>
<feature type="binding site" evidence="1">
    <location>
        <position position="74"/>
    </location>
    <ligand>
        <name>Zn(2+)</name>
        <dbReference type="ChEBI" id="CHEBI:29105"/>
        <label>3</label>
    </ligand>
</feature>
<feature type="binding site" evidence="1">
    <location>
        <position position="102"/>
    </location>
    <ligand>
        <name>Zn(2+)</name>
        <dbReference type="ChEBI" id="CHEBI:29105"/>
        <label>3</label>
    </ligand>
</feature>
<feature type="binding site" evidence="1">
    <location>
        <position position="132"/>
    </location>
    <ligand>
        <name>Zn(2+)</name>
        <dbReference type="ChEBI" id="CHEBI:29105"/>
        <label>3</label>
    </ligand>
</feature>
<feature type="binding site" evidence="1">
    <location>
        <position position="193"/>
    </location>
    <ligand>
        <name>Zn(2+)</name>
        <dbReference type="ChEBI" id="CHEBI:29105"/>
        <label>1</label>
    </ligand>
</feature>
<feature type="binding site" evidence="1">
    <location>
        <position position="195"/>
    </location>
    <ligand>
        <name>Zn(2+)</name>
        <dbReference type="ChEBI" id="CHEBI:29105"/>
        <label>2</label>
    </ligand>
</feature>
<protein>
    <recommendedName>
        <fullName evidence="1">Probable phosphatase swp_1620</fullName>
        <ecNumber evidence="1">3.1.3.-</ecNumber>
    </recommendedName>
</protein>
<organism>
    <name type="scientific">Shewanella piezotolerans (strain WP3 / JCM 13877)</name>
    <dbReference type="NCBI Taxonomy" id="225849"/>
    <lineage>
        <taxon>Bacteria</taxon>
        <taxon>Pseudomonadati</taxon>
        <taxon>Pseudomonadota</taxon>
        <taxon>Gammaproteobacteria</taxon>
        <taxon>Alteromonadales</taxon>
        <taxon>Shewanellaceae</taxon>
        <taxon>Shewanella</taxon>
    </lineage>
</organism>
<comment type="cofactor">
    <cofactor evidence="1">
        <name>Zn(2+)</name>
        <dbReference type="ChEBI" id="CHEBI:29105"/>
    </cofactor>
    <text evidence="1">Binds 3 Zn(2+) ions per subunit.</text>
</comment>
<comment type="similarity">
    <text evidence="1">Belongs to the PHP family.</text>
</comment>
<dbReference type="EC" id="3.1.3.-" evidence="1"/>
<dbReference type="EMBL" id="CP000472">
    <property type="protein sequence ID" value="ACJ28400.1"/>
    <property type="molecule type" value="Genomic_DNA"/>
</dbReference>
<dbReference type="RefSeq" id="WP_020911777.1">
    <property type="nucleotide sequence ID" value="NC_011566.1"/>
</dbReference>
<dbReference type="SMR" id="B8CL73"/>
<dbReference type="STRING" id="225849.swp_1620"/>
<dbReference type="KEGG" id="swp:swp_1620"/>
<dbReference type="eggNOG" id="COG1387">
    <property type="taxonomic scope" value="Bacteria"/>
</dbReference>
<dbReference type="HOGENOM" id="CLU_061999_0_1_6"/>
<dbReference type="OrthoDB" id="9808747at2"/>
<dbReference type="Proteomes" id="UP000000753">
    <property type="component" value="Chromosome"/>
</dbReference>
<dbReference type="GO" id="GO:0005829">
    <property type="term" value="C:cytosol"/>
    <property type="evidence" value="ECO:0007669"/>
    <property type="project" value="TreeGrafter"/>
</dbReference>
<dbReference type="GO" id="GO:0016791">
    <property type="term" value="F:phosphatase activity"/>
    <property type="evidence" value="ECO:0007669"/>
    <property type="project" value="UniProtKB-UniRule"/>
</dbReference>
<dbReference type="GO" id="GO:0008270">
    <property type="term" value="F:zinc ion binding"/>
    <property type="evidence" value="ECO:0007669"/>
    <property type="project" value="UniProtKB-UniRule"/>
</dbReference>
<dbReference type="GO" id="GO:0071978">
    <property type="term" value="P:bacterial-type flagellum-dependent swarming motility"/>
    <property type="evidence" value="ECO:0007669"/>
    <property type="project" value="TreeGrafter"/>
</dbReference>
<dbReference type="CDD" id="cd07437">
    <property type="entry name" value="PHP_HisPPase_Ycdx_like"/>
    <property type="match status" value="1"/>
</dbReference>
<dbReference type="FunFam" id="3.20.20.140:FF:000008">
    <property type="entry name" value="Probable phosphatase YcdX"/>
    <property type="match status" value="1"/>
</dbReference>
<dbReference type="Gene3D" id="3.20.20.140">
    <property type="entry name" value="Metal-dependent hydrolases"/>
    <property type="match status" value="1"/>
</dbReference>
<dbReference type="HAMAP" id="MF_01561">
    <property type="entry name" value="YcdX_phosphat"/>
    <property type="match status" value="1"/>
</dbReference>
<dbReference type="InterPro" id="IPR023710">
    <property type="entry name" value="Phosphatase_YcdX_put"/>
</dbReference>
<dbReference type="InterPro" id="IPR004013">
    <property type="entry name" value="PHP_dom"/>
</dbReference>
<dbReference type="InterPro" id="IPR050243">
    <property type="entry name" value="PHP_phosphatase"/>
</dbReference>
<dbReference type="InterPro" id="IPR003141">
    <property type="entry name" value="Pol/His_phosphatase_N"/>
</dbReference>
<dbReference type="InterPro" id="IPR016195">
    <property type="entry name" value="Pol/histidinol_Pase-like"/>
</dbReference>
<dbReference type="NCBIfam" id="NF006702">
    <property type="entry name" value="PRK09248.1"/>
    <property type="match status" value="1"/>
</dbReference>
<dbReference type="PANTHER" id="PTHR36928">
    <property type="entry name" value="PHOSPHATASE YCDX-RELATED"/>
    <property type="match status" value="1"/>
</dbReference>
<dbReference type="PANTHER" id="PTHR36928:SF1">
    <property type="entry name" value="PHOSPHATASE YCDX-RELATED"/>
    <property type="match status" value="1"/>
</dbReference>
<dbReference type="Pfam" id="PF02811">
    <property type="entry name" value="PHP"/>
    <property type="match status" value="1"/>
</dbReference>
<dbReference type="SMART" id="SM00481">
    <property type="entry name" value="POLIIIAc"/>
    <property type="match status" value="1"/>
</dbReference>
<dbReference type="SUPFAM" id="SSF89550">
    <property type="entry name" value="PHP domain-like"/>
    <property type="match status" value="1"/>
</dbReference>
<name>Y1620_SHEPW</name>